<keyword id="KW-0007">Acetylation</keyword>
<keyword id="KW-0025">Alternative splicing</keyword>
<keyword id="KW-0067">ATP-binding</keyword>
<keyword id="KW-0131">Cell cycle</keyword>
<keyword id="KW-0132">Cell division</keyword>
<keyword id="KW-0175">Coiled coil</keyword>
<keyword id="KW-0963">Cytoplasm</keyword>
<keyword id="KW-0217">Developmental protein</keyword>
<keyword id="KW-0221">Differentiation</keyword>
<keyword id="KW-0225">Disease variant</keyword>
<keyword id="KW-0418">Kinase</keyword>
<keyword id="KW-0479">Metal-binding</keyword>
<keyword id="KW-0498">Mitosis</keyword>
<keyword id="KW-0524">Neurogenesis</keyword>
<keyword id="KW-0547">Nucleotide-binding</keyword>
<keyword id="KW-0597">Phosphoprotein</keyword>
<keyword id="KW-0905">Primary microcephaly</keyword>
<keyword id="KW-1267">Proteomics identification</keyword>
<keyword id="KW-1185">Reference proteome</keyword>
<keyword id="KW-0723">Serine/threonine-protein kinase</keyword>
<keyword id="KW-0729">SH3-binding</keyword>
<keyword id="KW-0808">Transferase</keyword>
<keyword id="KW-0862">Zinc</keyword>
<keyword id="KW-0863">Zinc-finger</keyword>
<protein>
    <recommendedName>
        <fullName>Citron Rho-interacting kinase</fullName>
        <shortName>CRIK</shortName>
        <ecNumber evidence="2">2.7.11.1</ecNumber>
    </recommendedName>
    <alternativeName>
        <fullName>Serine/threonine-protein kinase 21</fullName>
    </alternativeName>
</protein>
<sequence length="2027" mass="231431">MLKFKYGARNPLDAGAAEPIASRASRLNLFFQGKPPFMTQQQMSPLSREGILDALFVLFEECSQPALMKIKHVSNFVRKYSDTIAELQELQPSAKDFEVRSLVGCGHFAEVQVVREKATGDIYAMKVMKKKALLAQEQVSFFEEERNILSRSTSPWIPQLQYAFQDKNHLYLVMEYQPGGDLLSLLNRYEDQLDENLIQFYLAELILAVHSVHLMGYVHRDIKPENILVDRTGHIKLVDFGSAAKMNSNKMVNAKLPIGTPDYMAPEVLTVMNGDGKGTYGLDCDWWSVGVIAYEMIYGRSPFAEGTSARTFNNIMNFQRFLKFPDDPKVSSDFLDLIQSLLCGQKERLKFEGLCCHPFFSKIDWNNIRNSPPPFVPTLKSDDDTSNFDEPEKNSWVSSSPCQLSPSGFSGEELPFVGFSYSKALGILGRSESVVSGLDSPAKTSSMEKKLLIKSKELQDSQDKCHKMEQEMTRLHRRVSEVEAVLSQKEVELKASETQRSLLEQDLATYITECSSLKRSLEQARMEVSQEDDKALQLLHDIREQSRKLQEIKEQEYQAQVEEMRLMMNQLEEDLVSARRRSDLYESELRESRLAAEEFKRKATECQHKLLKAKDQGKPEVGEYAKLEKINAEQQLKIQELQEKLEKAVKASTEATELLQNIRQAKERAERELEKLQNREDSSEGIRKKLVEAEELEEKHREAQVSAQHLEVHLKQKEQHYEEKIKVLDNQIKKDLADKETLENMMQRHEEEAHEKGKILSEQKAMINAMDSKIRSLEQRIVELSEANKLAANSSLFTQRNMKAQEEMISELRQQKFYLETQAGKLEAQNRKLEEQLEKISHQDHSDKNRLLELETRLREVSLEHEEQKLELKRQLTELQLSLQERESQLTALQAARAALESQLRQAKTELEETTAEAEEEIQALTAHRDEIQRKFDALRNSCTVITDLEEQLNQLTEDNAELNNQNFYLSKQLDEASGANDEIVQLRSEVDHLRREITEREMQLTSQKQTMEALKTTCTMLEEQVMDLEALNDELLEKERQWEAWRSVLGDEKSQFECRVRELQRMLDTEKQSRARADQRITESRQVVELAVKEHKAEILALQQALKEQKLKAESLSDKLNDLEKKHAMLEMNARSLQQKLETERELKQRLLEEQAKLQQQMDLQKNHIFRLTQGLQEALDRADLLKTERSDLEYQLENIQVLYSHEKVKMEGTISQQTKLIDFLQAKMDQPAKKKKGLFSRRKEDPALPTQVPLQYNELKLALEKEKARCAELEEALQKTRIELRSAREEAAHRKATDHPHPSTPATARQQIAMSAIVRSPEHQPSAMSLLAPPSSRRKESSTPEEFSRRLKERMHHNIPHRFNVGLNMRATKCAVCLDTVHFGRQASKCLECQVMCHPKCSTCLPATCGLPAEYATHFTEAFCRDKMNSPGLQTKEPSSSLHLEGWMKVPRNNKRGQQGWDRKYIVLEGSKVLIYDNEAREAGQRPVEEFELCLPDGDVSIHGAVGASELANTAKADVPYILKMESHPHTTCWPGRTLYLLAPSFPDKQRWVTALESVVAGGRVSREKAEADAKLLGNSLLKLEGDDRLDMNCTLPFSDQVVLVGTEEGLYALNVLKNSLTHVPGIGAVFQIYIIKDLEKLLMIAGEERALCLVDVKKVKQSLAQSHLPAQPDISPNIFEAVKGCHLFGAGKIENGLCICAAMPSKVVILRYNENLSKYCIRKEIETSEPCSCIHFTNYSILIGTNKFYEIDMKQYTLEEFLDKNDHSLAPAVFAASSNSFPVSIVQVNSAGQREEYLLCFHEFGVFVDSYGRRSRTDDLKWSRLPLAFAYREPYLFVTHFNSLEVIEIQARSSAGTPARAYLDIPNPRYLGPAISSGAIYLASSYQDKLRVICCKGNLVKESGTEHHRGPSTSRSSPNKRGPPTYNEHITKRVASSPAPPEGPSHPREPSTPHRYREGRTELRRDKSPGRPLEREKSPGRMLSTRRERSPGRLFEDSSRGRLPAGAVRTPLSQVNKVWDQSSV</sequence>
<dbReference type="EC" id="2.7.11.1" evidence="2"/>
<dbReference type="EMBL" id="AY257469">
    <property type="protein sequence ID" value="AAP13528.1"/>
    <property type="molecule type" value="mRNA"/>
</dbReference>
<dbReference type="EMBL" id="AY209000">
    <property type="protein sequence ID" value="AAP43922.1"/>
    <property type="molecule type" value="mRNA"/>
</dbReference>
<dbReference type="EMBL" id="AY681966">
    <property type="protein sequence ID" value="AAV87216.1"/>
    <property type="molecule type" value="mRNA"/>
</dbReference>
<dbReference type="EMBL" id="AB023166">
    <property type="protein sequence ID" value="BAA76793.2"/>
    <property type="status" value="ALT_INIT"/>
    <property type="molecule type" value="mRNA"/>
</dbReference>
<dbReference type="EMBL" id="AC002563">
    <property type="protein sequence ID" value="AAB71327.1"/>
    <property type="molecule type" value="Genomic_DNA"/>
</dbReference>
<dbReference type="EMBL" id="AC079317">
    <property type="status" value="NOT_ANNOTATED_CDS"/>
    <property type="molecule type" value="Genomic_DNA"/>
</dbReference>
<dbReference type="EMBL" id="AC004813">
    <property type="status" value="NOT_ANNOTATED_CDS"/>
    <property type="molecule type" value="Genomic_DNA"/>
</dbReference>
<dbReference type="CCDS" id="CCDS55891.1">
    <molecule id="O14578-4"/>
</dbReference>
<dbReference type="CCDS" id="CCDS9192.1">
    <molecule id="O14578-1"/>
</dbReference>
<dbReference type="RefSeq" id="NP_001193928.1">
    <molecule id="O14578-4"/>
    <property type="nucleotide sequence ID" value="NM_001206999.2"/>
</dbReference>
<dbReference type="RefSeq" id="NP_009105.1">
    <molecule id="O14578-1"/>
    <property type="nucleotide sequence ID" value="NM_007174.3"/>
</dbReference>
<dbReference type="SMR" id="O14578"/>
<dbReference type="BioGRID" id="116290">
    <property type="interactions" value="1439"/>
</dbReference>
<dbReference type="FunCoup" id="O14578">
    <property type="interactions" value="770"/>
</dbReference>
<dbReference type="IntAct" id="O14578">
    <property type="interactions" value="26"/>
</dbReference>
<dbReference type="MINT" id="O14578"/>
<dbReference type="STRING" id="9606.ENSP00000376306"/>
<dbReference type="BindingDB" id="O14578"/>
<dbReference type="ChEMBL" id="CHEMBL5579"/>
<dbReference type="DrugBank" id="DB12010">
    <property type="generic name" value="Fostamatinib"/>
</dbReference>
<dbReference type="DrugCentral" id="O14578"/>
<dbReference type="GuidetoPHARMACOLOGY" id="1509"/>
<dbReference type="GlyGen" id="O14578">
    <property type="glycosylation" value="3 sites, 1 N-linked glycan (1 site), 1 O-linked glycan (1 site)"/>
</dbReference>
<dbReference type="iPTMnet" id="O14578"/>
<dbReference type="PhosphoSitePlus" id="O14578"/>
<dbReference type="SwissPalm" id="O14578"/>
<dbReference type="BioMuta" id="CIT"/>
<dbReference type="CPTAC" id="CPTAC-2811"/>
<dbReference type="CPTAC" id="CPTAC-3078"/>
<dbReference type="jPOST" id="O14578"/>
<dbReference type="MassIVE" id="O14578"/>
<dbReference type="PaxDb" id="9606-ENSP00000376306"/>
<dbReference type="PeptideAtlas" id="O14578"/>
<dbReference type="ProteomicsDB" id="48094">
    <molecule id="O14578-1"/>
</dbReference>
<dbReference type="ProteomicsDB" id="48095">
    <molecule id="O14578-2"/>
</dbReference>
<dbReference type="ProteomicsDB" id="48096">
    <molecule id="O14578-3"/>
</dbReference>
<dbReference type="ProteomicsDB" id="48097">
    <molecule id="O14578-4"/>
</dbReference>
<dbReference type="Pumba" id="O14578"/>
<dbReference type="Antibodypedia" id="18910">
    <property type="antibodies" value="179 antibodies from 23 providers"/>
</dbReference>
<dbReference type="DNASU" id="11113"/>
<dbReference type="Ensembl" id="ENST00000261833.11">
    <molecule id="O14578-1"/>
    <property type="protein sequence ID" value="ENSP00000261833.7"/>
    <property type="gene ID" value="ENSG00000122966.18"/>
</dbReference>
<dbReference type="Ensembl" id="ENST00000392521.7">
    <molecule id="O14578-4"/>
    <property type="protein sequence ID" value="ENSP00000376306.2"/>
    <property type="gene ID" value="ENSG00000122966.18"/>
</dbReference>
<dbReference type="GeneID" id="11113"/>
<dbReference type="KEGG" id="hsa:11113"/>
<dbReference type="MANE-Select" id="ENST00000392521.7">
    <molecule id="O14578-4"/>
    <property type="protein sequence ID" value="ENSP00000376306.2"/>
    <property type="RefSeq nucleotide sequence ID" value="NM_001206999.2"/>
    <property type="RefSeq protein sequence ID" value="NP_001193928.1"/>
</dbReference>
<dbReference type="UCSC" id="uc001txi.3">
    <molecule id="O14578-1"/>
    <property type="organism name" value="human"/>
</dbReference>
<dbReference type="AGR" id="HGNC:1985"/>
<dbReference type="CTD" id="11113"/>
<dbReference type="DisGeNET" id="11113"/>
<dbReference type="GeneCards" id="CIT"/>
<dbReference type="HGNC" id="HGNC:1985">
    <property type="gene designation" value="CIT"/>
</dbReference>
<dbReference type="HPA" id="ENSG00000122966">
    <property type="expression patterns" value="Tissue enhanced (brain)"/>
</dbReference>
<dbReference type="MalaCards" id="CIT"/>
<dbReference type="MIM" id="605629">
    <property type="type" value="gene"/>
</dbReference>
<dbReference type="MIM" id="617090">
    <property type="type" value="phenotype"/>
</dbReference>
<dbReference type="neXtProt" id="NX_O14578"/>
<dbReference type="OpenTargets" id="ENSG00000122966"/>
<dbReference type="Orphanet" id="2512">
    <property type="disease" value="Autosomal recessive primary microcephaly"/>
</dbReference>
<dbReference type="PharmGKB" id="PA26522"/>
<dbReference type="VEuPathDB" id="HostDB:ENSG00000122966"/>
<dbReference type="eggNOG" id="KOG0612">
    <property type="taxonomic scope" value="Eukaryota"/>
</dbReference>
<dbReference type="eggNOG" id="KOG0976">
    <property type="taxonomic scope" value="Eukaryota"/>
</dbReference>
<dbReference type="GeneTree" id="ENSGT01030000234517"/>
<dbReference type="HOGENOM" id="CLU_000288_63_5_1"/>
<dbReference type="InParanoid" id="O14578"/>
<dbReference type="OMA" id="ESITTRC"/>
<dbReference type="OrthoDB" id="5919042at2759"/>
<dbReference type="PAN-GO" id="O14578">
    <property type="GO annotations" value="5 GO annotations based on evolutionary models"/>
</dbReference>
<dbReference type="PhylomeDB" id="O14578"/>
<dbReference type="TreeFam" id="TF101140"/>
<dbReference type="PathwayCommons" id="O14578"/>
<dbReference type="Reactome" id="R-HSA-5625900">
    <property type="pathway name" value="RHO GTPases activate CIT"/>
</dbReference>
<dbReference type="Reactome" id="R-HSA-8980692">
    <property type="pathway name" value="RHOA GTPase cycle"/>
</dbReference>
<dbReference type="Reactome" id="R-HSA-9013026">
    <property type="pathway name" value="RHOB GTPase cycle"/>
</dbReference>
<dbReference type="Reactome" id="R-HSA-9013106">
    <property type="pathway name" value="RHOC GTPase cycle"/>
</dbReference>
<dbReference type="Reactome" id="R-HSA-9013149">
    <property type="pathway name" value="RAC1 GTPase cycle"/>
</dbReference>
<dbReference type="SignaLink" id="O14578"/>
<dbReference type="SIGNOR" id="O14578"/>
<dbReference type="BioGRID-ORCS" id="11113">
    <property type="hits" value="290 hits in 1207 CRISPR screens"/>
</dbReference>
<dbReference type="CD-CODE" id="DEE660B4">
    <property type="entry name" value="Stress granule"/>
</dbReference>
<dbReference type="CD-CODE" id="FB4E32DD">
    <property type="entry name" value="Presynaptic clusters and postsynaptic densities"/>
</dbReference>
<dbReference type="ChiTaRS" id="CIT">
    <property type="organism name" value="human"/>
</dbReference>
<dbReference type="GeneWiki" id="CIT_(gene)"/>
<dbReference type="GenomeRNAi" id="11113"/>
<dbReference type="Pharos" id="O14578">
    <property type="development level" value="Tchem"/>
</dbReference>
<dbReference type="PRO" id="PR:O14578"/>
<dbReference type="Proteomes" id="UP000005640">
    <property type="component" value="Chromosome 12"/>
</dbReference>
<dbReference type="RNAct" id="O14578">
    <property type="molecule type" value="protein"/>
</dbReference>
<dbReference type="Bgee" id="ENSG00000122966">
    <property type="expression patterns" value="Expressed in lateral nuclear group of thalamus and 161 other cell types or tissues"/>
</dbReference>
<dbReference type="ExpressionAtlas" id="O14578">
    <property type="expression patterns" value="baseline and differential"/>
</dbReference>
<dbReference type="GO" id="GO:0005829">
    <property type="term" value="C:cytosol"/>
    <property type="evidence" value="ECO:0000314"/>
    <property type="project" value="FlyBase"/>
</dbReference>
<dbReference type="GO" id="GO:0016020">
    <property type="term" value="C:membrane"/>
    <property type="evidence" value="ECO:0007005"/>
    <property type="project" value="UniProtKB"/>
</dbReference>
<dbReference type="GO" id="GO:0005524">
    <property type="term" value="F:ATP binding"/>
    <property type="evidence" value="ECO:0007669"/>
    <property type="project" value="UniProtKB-KW"/>
</dbReference>
<dbReference type="GO" id="GO:0030165">
    <property type="term" value="F:PDZ domain binding"/>
    <property type="evidence" value="ECO:0000314"/>
    <property type="project" value="UniProtKB"/>
</dbReference>
<dbReference type="GO" id="GO:0019901">
    <property type="term" value="F:protein kinase binding"/>
    <property type="evidence" value="ECO:0000353"/>
    <property type="project" value="FlyBase"/>
</dbReference>
<dbReference type="GO" id="GO:0106310">
    <property type="term" value="F:protein serine kinase activity"/>
    <property type="evidence" value="ECO:0007669"/>
    <property type="project" value="RHEA"/>
</dbReference>
<dbReference type="GO" id="GO:0004674">
    <property type="term" value="F:protein serine/threonine kinase activity"/>
    <property type="evidence" value="ECO:0000250"/>
    <property type="project" value="UniProtKB"/>
</dbReference>
<dbReference type="GO" id="GO:0030291">
    <property type="term" value="F:protein serine/threonine kinase inhibitor activity"/>
    <property type="evidence" value="ECO:0000314"/>
    <property type="project" value="FlyBase"/>
</dbReference>
<dbReference type="GO" id="GO:0097110">
    <property type="term" value="F:scaffold protein binding"/>
    <property type="evidence" value="ECO:0000314"/>
    <property type="project" value="BHF-UCL"/>
</dbReference>
<dbReference type="GO" id="GO:0017124">
    <property type="term" value="F:SH3 domain binding"/>
    <property type="evidence" value="ECO:0007669"/>
    <property type="project" value="UniProtKB-KW"/>
</dbReference>
<dbReference type="GO" id="GO:0001223">
    <property type="term" value="F:transcription coactivator binding"/>
    <property type="evidence" value="ECO:0000353"/>
    <property type="project" value="FlyBase"/>
</dbReference>
<dbReference type="GO" id="GO:0008270">
    <property type="term" value="F:zinc ion binding"/>
    <property type="evidence" value="ECO:0007669"/>
    <property type="project" value="UniProtKB-KW"/>
</dbReference>
<dbReference type="GO" id="GO:0048699">
    <property type="term" value="P:generation of neurons"/>
    <property type="evidence" value="ECO:0000250"/>
    <property type="project" value="UniProtKB"/>
</dbReference>
<dbReference type="GO" id="GO:0000278">
    <property type="term" value="P:mitotic cell cycle"/>
    <property type="evidence" value="ECO:0000250"/>
    <property type="project" value="UniProtKB"/>
</dbReference>
<dbReference type="GO" id="GO:0000281">
    <property type="term" value="P:mitotic cytokinesis"/>
    <property type="evidence" value="ECO:0000315"/>
    <property type="project" value="UniProtKB"/>
</dbReference>
<dbReference type="GO" id="GO:0035331">
    <property type="term" value="P:negative regulation of hippo signaling"/>
    <property type="evidence" value="ECO:0000315"/>
    <property type="project" value="FlyBase"/>
</dbReference>
<dbReference type="GO" id="GO:0051402">
    <property type="term" value="P:neuron apoptotic process"/>
    <property type="evidence" value="ECO:0000315"/>
    <property type="project" value="UniProtKB"/>
</dbReference>
<dbReference type="GO" id="GO:0032467">
    <property type="term" value="P:positive regulation of cytokinesis"/>
    <property type="evidence" value="ECO:0000315"/>
    <property type="project" value="UniProtKB"/>
</dbReference>
<dbReference type="GO" id="GO:0032956">
    <property type="term" value="P:regulation of actin cytoskeleton organization"/>
    <property type="evidence" value="ECO:0000318"/>
    <property type="project" value="GO_Central"/>
</dbReference>
<dbReference type="CDD" id="cd20814">
    <property type="entry name" value="CRIK"/>
    <property type="match status" value="1"/>
</dbReference>
<dbReference type="CDD" id="cd05601">
    <property type="entry name" value="STKc_CRIK"/>
    <property type="match status" value="1"/>
</dbReference>
<dbReference type="FunFam" id="1.10.510.10:FF:000234">
    <property type="entry name" value="Citron rho-interacting serine/threonine kinase"/>
    <property type="match status" value="1"/>
</dbReference>
<dbReference type="FunFam" id="2.30.29.30:FF:000081">
    <property type="entry name" value="Citron rho-interacting serine/threonine kinase"/>
    <property type="match status" value="1"/>
</dbReference>
<dbReference type="FunFam" id="3.30.200.20:FF:000224">
    <property type="entry name" value="Citron rho-interacting serine/threonine kinase"/>
    <property type="match status" value="1"/>
</dbReference>
<dbReference type="FunFam" id="3.30.60.20:FF:000018">
    <property type="entry name" value="Citron rho-interacting serine/threonine kinase"/>
    <property type="match status" value="1"/>
</dbReference>
<dbReference type="Gene3D" id="1.10.287.1490">
    <property type="match status" value="1"/>
</dbReference>
<dbReference type="Gene3D" id="1.20.5.340">
    <property type="match status" value="1"/>
</dbReference>
<dbReference type="Gene3D" id="3.30.60.20">
    <property type="match status" value="1"/>
</dbReference>
<dbReference type="Gene3D" id="3.30.200.20">
    <property type="entry name" value="Phosphorylase Kinase, domain 1"/>
    <property type="match status" value="1"/>
</dbReference>
<dbReference type="Gene3D" id="2.30.29.30">
    <property type="entry name" value="Pleckstrin-homology domain (PH domain)/Phosphotyrosine-binding domain (PTB)"/>
    <property type="match status" value="1"/>
</dbReference>
<dbReference type="Gene3D" id="1.10.510.10">
    <property type="entry name" value="Transferase(Phosphotransferase) domain 1"/>
    <property type="match status" value="1"/>
</dbReference>
<dbReference type="InterPro" id="IPR000961">
    <property type="entry name" value="AGC-kinase_C"/>
</dbReference>
<dbReference type="InterPro" id="IPR046349">
    <property type="entry name" value="C1-like_sf"/>
</dbReference>
<dbReference type="InterPro" id="IPR017405">
    <property type="entry name" value="Citron_Rho-interacting_kinase"/>
</dbReference>
<dbReference type="InterPro" id="IPR001180">
    <property type="entry name" value="CNH_dom"/>
</dbReference>
<dbReference type="InterPro" id="IPR037708">
    <property type="entry name" value="CRIK_dom"/>
</dbReference>
<dbReference type="InterPro" id="IPR011009">
    <property type="entry name" value="Kinase-like_dom_sf"/>
</dbReference>
<dbReference type="InterPro" id="IPR002219">
    <property type="entry name" value="PE/DAG-bd"/>
</dbReference>
<dbReference type="InterPro" id="IPR011993">
    <property type="entry name" value="PH-like_dom_sf"/>
</dbReference>
<dbReference type="InterPro" id="IPR001849">
    <property type="entry name" value="PH_domain"/>
</dbReference>
<dbReference type="InterPro" id="IPR017892">
    <property type="entry name" value="Pkinase_C"/>
</dbReference>
<dbReference type="InterPro" id="IPR000719">
    <property type="entry name" value="Prot_kinase_dom"/>
</dbReference>
<dbReference type="InterPro" id="IPR017441">
    <property type="entry name" value="Protein_kinase_ATP_BS"/>
</dbReference>
<dbReference type="InterPro" id="IPR050839">
    <property type="entry name" value="Rho-assoc_Ser/Thr_Kinase"/>
</dbReference>
<dbReference type="InterPro" id="IPR008271">
    <property type="entry name" value="Ser/Thr_kinase_AS"/>
</dbReference>
<dbReference type="PANTHER" id="PTHR22988:SF71">
    <property type="entry name" value="CITRON RHO-INTERACTING KINASE"/>
    <property type="match status" value="1"/>
</dbReference>
<dbReference type="PANTHER" id="PTHR22988">
    <property type="entry name" value="MYOTONIC DYSTROPHY S/T KINASE-RELATED"/>
    <property type="match status" value="1"/>
</dbReference>
<dbReference type="Pfam" id="PF00780">
    <property type="entry name" value="CNH"/>
    <property type="match status" value="1"/>
</dbReference>
<dbReference type="Pfam" id="PF00169">
    <property type="entry name" value="PH"/>
    <property type="match status" value="1"/>
</dbReference>
<dbReference type="Pfam" id="PF00069">
    <property type="entry name" value="Pkinase"/>
    <property type="match status" value="1"/>
</dbReference>
<dbReference type="Pfam" id="PF00433">
    <property type="entry name" value="Pkinase_C"/>
    <property type="match status" value="1"/>
</dbReference>
<dbReference type="PIRSF" id="PIRSF038145">
    <property type="entry name" value="Citron_Rho-interacting_kinase"/>
    <property type="match status" value="1"/>
</dbReference>
<dbReference type="SMART" id="SM00109">
    <property type="entry name" value="C1"/>
    <property type="match status" value="1"/>
</dbReference>
<dbReference type="SMART" id="SM00036">
    <property type="entry name" value="CNH"/>
    <property type="match status" value="1"/>
</dbReference>
<dbReference type="SMART" id="SM00233">
    <property type="entry name" value="PH"/>
    <property type="match status" value="1"/>
</dbReference>
<dbReference type="SMART" id="SM00133">
    <property type="entry name" value="S_TK_X"/>
    <property type="match status" value="1"/>
</dbReference>
<dbReference type="SMART" id="SM00220">
    <property type="entry name" value="S_TKc"/>
    <property type="match status" value="1"/>
</dbReference>
<dbReference type="SUPFAM" id="SSF57889">
    <property type="entry name" value="Cysteine-rich domain"/>
    <property type="match status" value="1"/>
</dbReference>
<dbReference type="SUPFAM" id="SSF50729">
    <property type="entry name" value="PH domain-like"/>
    <property type="match status" value="1"/>
</dbReference>
<dbReference type="SUPFAM" id="SSF56112">
    <property type="entry name" value="Protein kinase-like (PK-like)"/>
    <property type="match status" value="1"/>
</dbReference>
<dbReference type="PROSITE" id="PS51285">
    <property type="entry name" value="AGC_KINASE_CTER"/>
    <property type="match status" value="1"/>
</dbReference>
<dbReference type="PROSITE" id="PS50219">
    <property type="entry name" value="CNH"/>
    <property type="match status" value="1"/>
</dbReference>
<dbReference type="PROSITE" id="PS50003">
    <property type="entry name" value="PH_DOMAIN"/>
    <property type="match status" value="1"/>
</dbReference>
<dbReference type="PROSITE" id="PS00107">
    <property type="entry name" value="PROTEIN_KINASE_ATP"/>
    <property type="match status" value="1"/>
</dbReference>
<dbReference type="PROSITE" id="PS50011">
    <property type="entry name" value="PROTEIN_KINASE_DOM"/>
    <property type="match status" value="1"/>
</dbReference>
<dbReference type="PROSITE" id="PS00108">
    <property type="entry name" value="PROTEIN_KINASE_ST"/>
    <property type="match status" value="1"/>
</dbReference>
<dbReference type="PROSITE" id="PS00479">
    <property type="entry name" value="ZF_DAG_PE_1"/>
    <property type="match status" value="1"/>
</dbReference>
<dbReference type="PROSITE" id="PS50081">
    <property type="entry name" value="ZF_DAG_PE_2"/>
    <property type="match status" value="1"/>
</dbReference>
<organism>
    <name type="scientific">Homo sapiens</name>
    <name type="common">Human</name>
    <dbReference type="NCBI Taxonomy" id="9606"/>
    <lineage>
        <taxon>Eukaryota</taxon>
        <taxon>Metazoa</taxon>
        <taxon>Chordata</taxon>
        <taxon>Craniata</taxon>
        <taxon>Vertebrata</taxon>
        <taxon>Euteleostomi</taxon>
        <taxon>Mammalia</taxon>
        <taxon>Eutheria</taxon>
        <taxon>Euarchontoglires</taxon>
        <taxon>Primates</taxon>
        <taxon>Haplorrhini</taxon>
        <taxon>Catarrhini</taxon>
        <taxon>Hominidae</taxon>
        <taxon>Homo</taxon>
    </lineage>
</organism>
<proteinExistence type="evidence at protein level"/>
<accession>O14578</accession>
<accession>Q2M5E1</accession>
<accession>Q6XUH8</accession>
<accession>Q86UQ9</accession>
<accession>Q9UPZ7</accession>
<comment type="function">
    <text evidence="11 12 15 16">Plays a role in cytokinesis. Required for KIF14 localization to the central spindle and midbody. Putative RHO/RAC effector that binds to the GTP-bound forms of RHO and RAC1. It probably binds p21 with a tighter specificity in vivo. Displays serine/threonine protein kinase activity. Plays an important role in the regulation of cytokinesis and the development of the central nervous system. Phosphorylates MYL9/MLC2.</text>
</comment>
<comment type="catalytic activity">
    <reaction>
        <text>L-seryl-[protein] + ATP = O-phospho-L-seryl-[protein] + ADP + H(+)</text>
        <dbReference type="Rhea" id="RHEA:17989"/>
        <dbReference type="Rhea" id="RHEA-COMP:9863"/>
        <dbReference type="Rhea" id="RHEA-COMP:11604"/>
        <dbReference type="ChEBI" id="CHEBI:15378"/>
        <dbReference type="ChEBI" id="CHEBI:29999"/>
        <dbReference type="ChEBI" id="CHEBI:30616"/>
        <dbReference type="ChEBI" id="CHEBI:83421"/>
        <dbReference type="ChEBI" id="CHEBI:456216"/>
        <dbReference type="EC" id="2.7.11.1"/>
    </reaction>
</comment>
<comment type="catalytic activity">
    <reaction>
        <text>L-threonyl-[protein] + ATP = O-phospho-L-threonyl-[protein] + ADP + H(+)</text>
        <dbReference type="Rhea" id="RHEA:46608"/>
        <dbReference type="Rhea" id="RHEA-COMP:11060"/>
        <dbReference type="Rhea" id="RHEA-COMP:11605"/>
        <dbReference type="ChEBI" id="CHEBI:15378"/>
        <dbReference type="ChEBI" id="CHEBI:30013"/>
        <dbReference type="ChEBI" id="CHEBI:30616"/>
        <dbReference type="ChEBI" id="CHEBI:61977"/>
        <dbReference type="ChEBI" id="CHEBI:456216"/>
        <dbReference type="EC" id="2.7.11.1"/>
    </reaction>
</comment>
<comment type="subunit">
    <text evidence="1 12 14">Directly interacts with KIF14 depending on the activation state (stronger interaction with the kinase-dead form). Homodimer (By similarity). Interacts with TTC3.</text>
</comment>
<comment type="subcellular location">
    <subcellularLocation>
        <location evidence="1">Cytoplasm</location>
    </subcellularLocation>
</comment>
<comment type="alternative products">
    <event type="alternative splicing"/>
    <isoform>
        <id>O14578-1</id>
        <name>1</name>
        <name>Long</name>
        <sequence type="displayed"/>
    </isoform>
    <isoform>
        <id>O14578-2</id>
        <name>2</name>
        <name>Short</name>
        <name>CRIK-SK</name>
        <sequence type="described" ref="VSP_012434 VSP_012435"/>
    </isoform>
    <isoform>
        <id>O14578-3</id>
        <name>3</name>
        <sequence type="described" ref="VSP_014507 VSP_014508 VSP_014509"/>
    </isoform>
    <isoform>
        <id>O14578-4</id>
        <name>4</name>
        <sequence type="described" ref="VSP_043301"/>
    </isoform>
</comment>
<comment type="disease" evidence="16 17 18 19">
    <disease id="DI-04821">
        <name>Microcephaly 17, primary, autosomal recessive</name>
        <acronym>MCPH17</acronym>
        <description>A form of microcephaly, a disease defined as a head circumference more than 3 standard deviations below the age, sex and ethnically matched mean. Brain weight is markedly reduced and the cerebral cortex is disproportionately small. MCPH17 is a severe form characterized by lissencephaly, enlarged ventricles, agenesis of the corpus callosum, cerebellar hypoplasia, and brainstem hypoplasia. Patients manifest delayed psychomotor development, intellectual disability, spasticity, axial hypotonia, and dysmorphic features.</description>
        <dbReference type="MIM" id="617090"/>
    </disease>
    <text>The disease is caused by variants affecting the gene represented in this entry.</text>
</comment>
<comment type="similarity">
    <text evidence="23">Belongs to the protein kinase superfamily. AGC Ser/Thr protein kinase family.</text>
</comment>
<comment type="sequence caution" evidence="23">
    <conflict type="erroneous initiation">
        <sequence resource="EMBL-CDS" id="BAA76793"/>
    </conflict>
    <text>Extended N-terminus.</text>
</comment>
<gene>
    <name type="primary">CIT</name>
    <name type="synonym">CRIK</name>
    <name type="synonym">KIAA0949</name>
    <name type="synonym">STK21</name>
</gene>
<name>CTRO_HUMAN</name>
<reference key="1">
    <citation type="submission" date="2003-03" db="EMBL/GenBank/DDBJ databases">
        <authorList>
            <person name="Huang C.Q."/>
            <person name="Wu S.L."/>
            <person name="Shan Y.X."/>
            <person name="Liu S."/>
            <person name="Xiao P.J."/>
        </authorList>
    </citation>
    <scope>NUCLEOTIDE SEQUENCE [MRNA] (ISOFORM 1)</scope>
</reference>
<reference key="2">
    <citation type="submission" date="2003-01" db="EMBL/GenBank/DDBJ databases">
        <title>Cloning and characterizing a novel human CRIK-SK gene.</title>
        <authorList>
            <person name="Mao Y."/>
            <person name="Xie Y."/>
            <person name="Wu Q."/>
        </authorList>
    </citation>
    <scope>NUCLEOTIDE SEQUENCE [MRNA] (ISOFORM 2)</scope>
</reference>
<reference key="3">
    <citation type="journal article" date="2005" name="Mol. Psychiatry">
        <title>Evidence of association between bipolar disorder and Citron on chromosome 12q24.</title>
        <authorList>
            <person name="Lyons-Warren A."/>
            <person name="Chang J.J."/>
            <person name="Balkissoon R."/>
            <person name="Kamiya A."/>
            <person name="Garant M."/>
            <person name="Nurnberger J."/>
            <person name="Scheftner W."/>
            <person name="Reich T."/>
            <person name="McMahon F."/>
            <person name="Kelsoe J."/>
            <person name="Gershon E."/>
            <person name="Coryell W."/>
            <person name="Byerley W."/>
            <person name="Berrettini W."/>
            <person name="Depaulo R."/>
            <person name="McInnis M."/>
            <person name="Sawa A."/>
        </authorList>
    </citation>
    <scope>NUCLEOTIDE SEQUENCE [MRNA] (ISOFORM 4)</scope>
</reference>
<reference key="4">
    <citation type="journal article" date="1999" name="DNA Res.">
        <title>Prediction of the coding sequences of unidentified human genes. XIII. The complete sequences of 100 new cDNA clones from brain which code for large proteins in vitro.</title>
        <authorList>
            <person name="Nagase T."/>
            <person name="Ishikawa K."/>
            <person name="Suyama M."/>
            <person name="Kikuno R."/>
            <person name="Hirosawa M."/>
            <person name="Miyajima N."/>
            <person name="Tanaka A."/>
            <person name="Kotani H."/>
            <person name="Nomura N."/>
            <person name="Ohara O."/>
        </authorList>
    </citation>
    <scope>NUCLEOTIDE SEQUENCE [LARGE SCALE MRNA] (ISOFORM 3)</scope>
    <source>
        <tissue>Brain</tissue>
    </source>
</reference>
<reference key="5">
    <citation type="submission" date="2005-01" db="EMBL/GenBank/DDBJ databases">
        <authorList>
            <person name="Ohara O."/>
            <person name="Nagase T."/>
            <person name="Kikuno R."/>
        </authorList>
    </citation>
    <scope>SEQUENCE REVISION</scope>
</reference>
<reference key="6">
    <citation type="journal article" date="2006" name="Nature">
        <title>The finished DNA sequence of human chromosome 12.</title>
        <authorList>
            <person name="Scherer S.E."/>
            <person name="Muzny D.M."/>
            <person name="Buhay C.J."/>
            <person name="Chen R."/>
            <person name="Cree A."/>
            <person name="Ding Y."/>
            <person name="Dugan-Rocha S."/>
            <person name="Gill R."/>
            <person name="Gunaratne P."/>
            <person name="Harris R.A."/>
            <person name="Hawes A.C."/>
            <person name="Hernandez J."/>
            <person name="Hodgson A.V."/>
            <person name="Hume J."/>
            <person name="Jackson A."/>
            <person name="Khan Z.M."/>
            <person name="Kovar-Smith C."/>
            <person name="Lewis L.R."/>
            <person name="Lozado R.J."/>
            <person name="Metzker M.L."/>
            <person name="Milosavljevic A."/>
            <person name="Miner G.R."/>
            <person name="Montgomery K.T."/>
            <person name="Morgan M.B."/>
            <person name="Nazareth L.V."/>
            <person name="Scott G."/>
            <person name="Sodergren E."/>
            <person name="Song X.-Z."/>
            <person name="Steffen D."/>
            <person name="Lovering R.C."/>
            <person name="Wheeler D.A."/>
            <person name="Worley K.C."/>
            <person name="Yuan Y."/>
            <person name="Zhang Z."/>
            <person name="Adams C.Q."/>
            <person name="Ansari-Lari M.A."/>
            <person name="Ayele M."/>
            <person name="Brown M.J."/>
            <person name="Chen G."/>
            <person name="Chen Z."/>
            <person name="Clerc-Blankenburg K.P."/>
            <person name="Davis C."/>
            <person name="Delgado O."/>
            <person name="Dinh H.H."/>
            <person name="Draper H."/>
            <person name="Gonzalez-Garay M.L."/>
            <person name="Havlak P."/>
            <person name="Jackson L.R."/>
            <person name="Jacob L.S."/>
            <person name="Kelly S.H."/>
            <person name="Li L."/>
            <person name="Li Z."/>
            <person name="Liu J."/>
            <person name="Liu W."/>
            <person name="Lu J."/>
            <person name="Maheshwari M."/>
            <person name="Nguyen B.-V."/>
            <person name="Okwuonu G.O."/>
            <person name="Pasternak S."/>
            <person name="Perez L.M."/>
            <person name="Plopper F.J.H."/>
            <person name="Santibanez J."/>
            <person name="Shen H."/>
            <person name="Tabor P.E."/>
            <person name="Verduzco D."/>
            <person name="Waldron L."/>
            <person name="Wang Q."/>
            <person name="Williams G.A."/>
            <person name="Zhang J."/>
            <person name="Zhou J."/>
            <person name="Allen C.C."/>
            <person name="Amin A.G."/>
            <person name="Anyalebechi V."/>
            <person name="Bailey M."/>
            <person name="Barbaria J.A."/>
            <person name="Bimage K.E."/>
            <person name="Bryant N.P."/>
            <person name="Burch P.E."/>
            <person name="Burkett C.E."/>
            <person name="Burrell K.L."/>
            <person name="Calderon E."/>
            <person name="Cardenas V."/>
            <person name="Carter K."/>
            <person name="Casias K."/>
            <person name="Cavazos I."/>
            <person name="Cavazos S.R."/>
            <person name="Ceasar H."/>
            <person name="Chacko J."/>
            <person name="Chan S.N."/>
            <person name="Chavez D."/>
            <person name="Christopoulos C."/>
            <person name="Chu J."/>
            <person name="Cockrell R."/>
            <person name="Cox C.D."/>
            <person name="Dang M."/>
            <person name="Dathorne S.R."/>
            <person name="David R."/>
            <person name="Davis C.M."/>
            <person name="Davy-Carroll L."/>
            <person name="Deshazo D.R."/>
            <person name="Donlin J.E."/>
            <person name="D'Souza L."/>
            <person name="Eaves K.A."/>
            <person name="Egan A."/>
            <person name="Emery-Cohen A.J."/>
            <person name="Escotto M."/>
            <person name="Flagg N."/>
            <person name="Forbes L.D."/>
            <person name="Gabisi A.M."/>
            <person name="Garza M."/>
            <person name="Hamilton C."/>
            <person name="Henderson N."/>
            <person name="Hernandez O."/>
            <person name="Hines S."/>
            <person name="Hogues M.E."/>
            <person name="Huang M."/>
            <person name="Idlebird D.G."/>
            <person name="Johnson R."/>
            <person name="Jolivet A."/>
            <person name="Jones S."/>
            <person name="Kagan R."/>
            <person name="King L.M."/>
            <person name="Leal B."/>
            <person name="Lebow H."/>
            <person name="Lee S."/>
            <person name="LeVan J.M."/>
            <person name="Lewis L.C."/>
            <person name="London P."/>
            <person name="Lorensuhewa L.M."/>
            <person name="Loulseged H."/>
            <person name="Lovett D.A."/>
            <person name="Lucier A."/>
            <person name="Lucier R.L."/>
            <person name="Ma J."/>
            <person name="Madu R.C."/>
            <person name="Mapua P."/>
            <person name="Martindale A.D."/>
            <person name="Martinez E."/>
            <person name="Massey E."/>
            <person name="Mawhiney S."/>
            <person name="Meador M.G."/>
            <person name="Mendez S."/>
            <person name="Mercado C."/>
            <person name="Mercado I.C."/>
            <person name="Merritt C.E."/>
            <person name="Miner Z.L."/>
            <person name="Minja E."/>
            <person name="Mitchell T."/>
            <person name="Mohabbat F."/>
            <person name="Mohabbat K."/>
            <person name="Montgomery B."/>
            <person name="Moore N."/>
            <person name="Morris S."/>
            <person name="Munidasa M."/>
            <person name="Ngo R.N."/>
            <person name="Nguyen N.B."/>
            <person name="Nickerson E."/>
            <person name="Nwaokelemeh O.O."/>
            <person name="Nwokenkwo S."/>
            <person name="Obregon M."/>
            <person name="Oguh M."/>
            <person name="Oragunye N."/>
            <person name="Oviedo R.J."/>
            <person name="Parish B.J."/>
            <person name="Parker D.N."/>
            <person name="Parrish J."/>
            <person name="Parks K.L."/>
            <person name="Paul H.A."/>
            <person name="Payton B.A."/>
            <person name="Perez A."/>
            <person name="Perrin W."/>
            <person name="Pickens A."/>
            <person name="Primus E.L."/>
            <person name="Pu L.-L."/>
            <person name="Puazo M."/>
            <person name="Quiles M.M."/>
            <person name="Quiroz J.B."/>
            <person name="Rabata D."/>
            <person name="Reeves K."/>
            <person name="Ruiz S.J."/>
            <person name="Shao H."/>
            <person name="Sisson I."/>
            <person name="Sonaike T."/>
            <person name="Sorelle R.P."/>
            <person name="Sutton A.E."/>
            <person name="Svatek A.F."/>
            <person name="Svetz L.A."/>
            <person name="Tamerisa K.S."/>
            <person name="Taylor T.R."/>
            <person name="Teague B."/>
            <person name="Thomas N."/>
            <person name="Thorn R.D."/>
            <person name="Trejos Z.Y."/>
            <person name="Trevino B.K."/>
            <person name="Ukegbu O.N."/>
            <person name="Urban J.B."/>
            <person name="Vasquez L.I."/>
            <person name="Vera V.A."/>
            <person name="Villasana D.M."/>
            <person name="Wang L."/>
            <person name="Ward-Moore S."/>
            <person name="Warren J.T."/>
            <person name="Wei X."/>
            <person name="White F."/>
            <person name="Williamson A.L."/>
            <person name="Wleczyk R."/>
            <person name="Wooden H.S."/>
            <person name="Wooden S.H."/>
            <person name="Yen J."/>
            <person name="Yoon L."/>
            <person name="Yoon V."/>
            <person name="Zorrilla S.E."/>
            <person name="Nelson D."/>
            <person name="Kucherlapati R."/>
            <person name="Weinstock G."/>
            <person name="Gibbs R.A."/>
        </authorList>
    </citation>
    <scope>NUCLEOTIDE SEQUENCE [LARGE SCALE GENOMIC DNA]</scope>
</reference>
<reference key="7">
    <citation type="journal article" date="2006" name="J. Cell Biol.">
        <title>KIF14 and citron kinase act together to promote efficient cytokinesis.</title>
        <authorList>
            <person name="Gruneberg U."/>
            <person name="Neef R."/>
            <person name="Li X."/>
            <person name="Chan E.H.Y."/>
            <person name="Chalamalasetty R.B."/>
            <person name="Nigg E.A."/>
            <person name="Barr F.A."/>
        </authorList>
    </citation>
    <scope>FUNCTION</scope>
    <scope>INTERACTION WITH KIF14</scope>
</reference>
<reference key="8">
    <citation type="journal article" date="2006" name="Mol. Biol. Cell">
        <title>Dissecting the role of Rho-mediated signaling in contractile ring formation.</title>
        <authorList>
            <person name="Kamijo K."/>
            <person name="Ohara N."/>
            <person name="Abe M."/>
            <person name="Uchimura T."/>
            <person name="Hosoya H."/>
            <person name="Lee J.S."/>
            <person name="Miki T."/>
        </authorList>
    </citation>
    <scope>FUNCTION</scope>
</reference>
<reference key="9">
    <citation type="journal article" date="2007" name="J. Cell Sci.">
        <title>The Down syndrome critical region protein TTC3 inhibits neuronal differentiation via RhoA and Citron kinase.</title>
        <authorList>
            <person name="Berto G."/>
            <person name="Camera P."/>
            <person name="Fusco C."/>
            <person name="Imarisio S."/>
            <person name="Ambrogio C."/>
            <person name="Chiarle R."/>
            <person name="Silengo L."/>
            <person name="Di Cunto F."/>
        </authorList>
    </citation>
    <scope>INTERACTION WITH TTC3</scope>
</reference>
<reference key="10">
    <citation type="journal article" date="2008" name="Proc. Natl. Acad. Sci. U.S.A.">
        <title>A quantitative atlas of mitotic phosphorylation.</title>
        <authorList>
            <person name="Dephoure N."/>
            <person name="Zhou C."/>
            <person name="Villen J."/>
            <person name="Beausoleil S.A."/>
            <person name="Bakalarski C.E."/>
            <person name="Elledge S.J."/>
            <person name="Gygi S.P."/>
        </authorList>
    </citation>
    <scope>PHOSPHORYLATION [LARGE SCALE ANALYSIS] AT SER-440</scope>
    <scope>IDENTIFICATION BY MASS SPECTROMETRY [LARGE SCALE ANALYSIS]</scope>
    <source>
        <tissue>Cervix carcinoma</tissue>
    </source>
</reference>
<reference key="11">
    <citation type="journal article" date="2009" name="Anal. Chem.">
        <title>Lys-N and trypsin cover complementary parts of the phosphoproteome in a refined SCX-based approach.</title>
        <authorList>
            <person name="Gauci S."/>
            <person name="Helbig A.O."/>
            <person name="Slijper M."/>
            <person name="Krijgsveld J."/>
            <person name="Heck A.J."/>
            <person name="Mohammed S."/>
        </authorList>
    </citation>
    <scope>IDENTIFICATION BY MASS SPECTROMETRY [LARGE SCALE ANALYSIS]</scope>
</reference>
<reference key="12">
    <citation type="journal article" date="2009" name="Sci. Signal.">
        <title>Quantitative phosphoproteomic analysis of T cell receptor signaling reveals system-wide modulation of protein-protein interactions.</title>
        <authorList>
            <person name="Mayya V."/>
            <person name="Lundgren D.H."/>
            <person name="Hwang S.-I."/>
            <person name="Rezaul K."/>
            <person name="Wu L."/>
            <person name="Eng J.K."/>
            <person name="Rodionov V."/>
            <person name="Han D.K."/>
        </authorList>
    </citation>
    <scope>PHOSPHORYLATION [LARGE SCALE ANALYSIS] AT SER-433 AND SER-440</scope>
    <scope>IDENTIFICATION BY MASS SPECTROMETRY [LARGE SCALE ANALYSIS]</scope>
    <source>
        <tissue>Leukemic T-cell</tissue>
    </source>
</reference>
<reference key="13">
    <citation type="journal article" date="2009" name="Science">
        <title>Lysine acetylation targets protein complexes and co-regulates major cellular functions.</title>
        <authorList>
            <person name="Choudhary C."/>
            <person name="Kumar C."/>
            <person name="Gnad F."/>
            <person name="Nielsen M.L."/>
            <person name="Rehman M."/>
            <person name="Walther T.C."/>
            <person name="Olsen J.V."/>
            <person name="Mann M."/>
        </authorList>
    </citation>
    <scope>ACETYLATION [LARGE SCALE ANALYSIS] AT LYS-1721</scope>
    <scope>IDENTIFICATION BY MASS SPECTROMETRY [LARGE SCALE ANALYSIS]</scope>
</reference>
<reference key="14">
    <citation type="journal article" date="2010" name="Sci. Signal.">
        <title>Quantitative phosphoproteomics reveals widespread full phosphorylation site occupancy during mitosis.</title>
        <authorList>
            <person name="Olsen J.V."/>
            <person name="Vermeulen M."/>
            <person name="Santamaria A."/>
            <person name="Kumar C."/>
            <person name="Miller M.L."/>
            <person name="Jensen L.J."/>
            <person name="Gnad F."/>
            <person name="Cox J."/>
            <person name="Jensen T.S."/>
            <person name="Nigg E.A."/>
            <person name="Brunak S."/>
            <person name="Mann M."/>
        </authorList>
    </citation>
    <scope>PHOSPHORYLATION [LARGE SCALE ANALYSIS] AT SER-440</scope>
    <scope>IDENTIFICATION BY MASS SPECTROMETRY [LARGE SCALE ANALYSIS]</scope>
    <source>
        <tissue>Cervix carcinoma</tissue>
    </source>
</reference>
<reference key="15">
    <citation type="journal article" date="2011" name="BMC Syst. Biol.">
        <title>Initial characterization of the human central proteome.</title>
        <authorList>
            <person name="Burkard T.R."/>
            <person name="Planyavsky M."/>
            <person name="Kaupe I."/>
            <person name="Breitwieser F.P."/>
            <person name="Buerckstuemmer T."/>
            <person name="Bennett K.L."/>
            <person name="Superti-Furga G."/>
            <person name="Colinge J."/>
        </authorList>
    </citation>
    <scope>IDENTIFICATION BY MASS SPECTROMETRY [LARGE SCALE ANALYSIS]</scope>
</reference>
<reference key="16">
    <citation type="journal article" date="2011" name="FEBS Lett.">
        <title>Chelerythrine perturbs lamellar actomyosin filaments by selective inhibition of myotonic dystrophy kinase-related Cdc42-binding kinase.</title>
        <authorList>
            <person name="Tan I."/>
            <person name="Lai J."/>
            <person name="Yong J."/>
            <person name="Li S.F."/>
            <person name="Leung T."/>
        </authorList>
    </citation>
    <scope>FUNCTION IN PHOSPHORYLATION OF MYL9/MLC2</scope>
</reference>
<reference key="17">
    <citation type="journal article" date="2011" name="Sci. Signal.">
        <title>System-wide temporal characterization of the proteome and phosphoproteome of human embryonic stem cell differentiation.</title>
        <authorList>
            <person name="Rigbolt K.T."/>
            <person name="Prokhorova T.A."/>
            <person name="Akimov V."/>
            <person name="Henningsen J."/>
            <person name="Johansen P.T."/>
            <person name="Kratchmarova I."/>
            <person name="Kassem M."/>
            <person name="Mann M."/>
            <person name="Olsen J.V."/>
            <person name="Blagoev B."/>
        </authorList>
    </citation>
    <scope>PHOSPHORYLATION [LARGE SCALE ANALYSIS] AT SER-440</scope>
    <scope>IDENTIFICATION BY MASS SPECTROMETRY [LARGE SCALE ANALYSIS]</scope>
</reference>
<reference key="18">
    <citation type="journal article" date="2012" name="Proc. Natl. Acad. Sci. U.S.A.">
        <title>N-terminal acetylome analyses and functional insights of the N-terminal acetyltransferase NatB.</title>
        <authorList>
            <person name="Van Damme P."/>
            <person name="Lasa M."/>
            <person name="Polevoda B."/>
            <person name="Gazquez C."/>
            <person name="Elosegui-Artola A."/>
            <person name="Kim D.S."/>
            <person name="De Juan-Pardo E."/>
            <person name="Demeyer K."/>
            <person name="Hole K."/>
            <person name="Larrea E."/>
            <person name="Timmerman E."/>
            <person name="Prieto J."/>
            <person name="Arnesen T."/>
            <person name="Sherman F."/>
            <person name="Gevaert K."/>
            <person name="Aldabe R."/>
        </authorList>
    </citation>
    <scope>ACETYLATION [LARGE SCALE ANALYSIS] AT MET-1</scope>
    <scope>IDENTIFICATION BY MASS SPECTROMETRY [LARGE SCALE ANALYSIS]</scope>
</reference>
<reference key="19">
    <citation type="journal article" date="2013" name="J. Proteome Res.">
        <title>Toward a comprehensive characterization of a human cancer cell phosphoproteome.</title>
        <authorList>
            <person name="Zhou H."/>
            <person name="Di Palma S."/>
            <person name="Preisinger C."/>
            <person name="Peng M."/>
            <person name="Polat A.N."/>
            <person name="Heck A.J."/>
            <person name="Mohammed S."/>
        </authorList>
    </citation>
    <scope>PHOSPHORYLATION [LARGE SCALE ANALYSIS] AT SER-433; SER-440; SER-480; SER-582; SER-1940; SER-1993 AND THR-2013</scope>
    <scope>IDENTIFICATION BY MASS SPECTROMETRY [LARGE SCALE ANALYSIS]</scope>
    <source>
        <tissue>Cervix carcinoma</tissue>
        <tissue>Erythroleukemia</tissue>
    </source>
</reference>
<reference key="20">
    <citation type="journal article" date="2016" name="Am. J. Hum. Genet.">
        <title>Biallelic mutations in Citron kinase Link mitotic cytokinesis to human primary microcephaly.</title>
        <authorList>
            <person name="Li H."/>
            <person name="Bielas S.L."/>
            <person name="Zaki M.S."/>
            <person name="Ismail S."/>
            <person name="Farfara D."/>
            <person name="Um K."/>
            <person name="Rosti R.O."/>
            <person name="Scott E.C."/>
            <person name="Tu S."/>
            <person name="Chi N.C."/>
            <person name="Gabriel S."/>
            <person name="Erson-Omay E.Z."/>
            <person name="Ercan-Sencicek A.G."/>
            <person name="Yasuno K."/>
            <person name="Caglayan A.O."/>
            <person name="Kaymakcalan H."/>
            <person name="Ekici B."/>
            <person name="Bilguvar K."/>
            <person name="Gunel M."/>
            <person name="Gleeson J.G."/>
        </authorList>
    </citation>
    <scope>FUNCTION</scope>
    <scope>INVOLVEMENT IN MCPH17</scope>
    <scope>VARIANTS MCPH17 VAL-106; GLN-126 AND VAL-230</scope>
    <scope>CHARACTERIZATION OF VARIANTS MCPH17 VAL-106; GLN-126 AND VAL-230</scope>
</reference>
<reference key="21">
    <citation type="journal article" date="2016" name="Am. J. Hum. Genet.">
        <title>Mutations in Citron kinase cause recessive microlissencephaly with multinucleated neurons.</title>
        <authorList>
            <person name="Harding B.N."/>
            <person name="Moccia A."/>
            <person name="Drunat S."/>
            <person name="Soukarieh O."/>
            <person name="Tubeuf H."/>
            <person name="Chitty L.S."/>
            <person name="Verloes A."/>
            <person name="Gressens P."/>
            <person name="El Ghouzzi V."/>
            <person name="Joriot S."/>
            <person name="Di Cunto F."/>
            <person name="Martins A."/>
            <person name="Passemard S."/>
            <person name="Bielas S.L."/>
        </authorList>
    </citation>
    <scope>INVOLVEMENT IN MCPH17</scope>
</reference>
<reference key="22">
    <citation type="journal article" date="2016" name="Hum. Genet.">
        <title>Mutations in CIT, encoding citron rho-interacting serine/threonine kinase, cause severe primary microcephaly in humans.</title>
        <authorList>
            <person name="Shaheen R."/>
            <person name="Hashem A."/>
            <person name="Abdel-Salam G.M."/>
            <person name="Al-Fadhli F."/>
            <person name="Ewida N."/>
            <person name="Alkuraya F.S."/>
        </authorList>
    </citation>
    <scope>INVOLVEMENT IN MCPH17</scope>
</reference>
<reference key="23">
    <citation type="journal article" date="2016" name="Hum. Genet.">
        <title>CIT, a gene involved in neurogenic cytokinesis, is mutated in human primary microcephaly.</title>
        <authorList>
            <person name="Basit S."/>
            <person name="Al-Harbi K.M."/>
            <person name="Alhijji S.A."/>
            <person name="Albalawi A.M."/>
            <person name="Alharby E."/>
            <person name="Eldardear A."/>
            <person name="Samman M.I."/>
        </authorList>
    </citation>
    <scope>INVOLVEMENT IN MCPH17</scope>
</reference>
<reference key="24">
    <citation type="journal article" date="2007" name="Nature">
        <title>Patterns of somatic mutation in human cancer genomes.</title>
        <authorList>
            <person name="Greenman C."/>
            <person name="Stephens P."/>
            <person name="Smith R."/>
            <person name="Dalgliesh G.L."/>
            <person name="Hunter C."/>
            <person name="Bignell G."/>
            <person name="Davies H."/>
            <person name="Teague J."/>
            <person name="Butler A."/>
            <person name="Stevens C."/>
            <person name="Edkins S."/>
            <person name="O'Meara S."/>
            <person name="Vastrik I."/>
            <person name="Schmidt E.E."/>
            <person name="Avis T."/>
            <person name="Barthorpe S."/>
            <person name="Bhamra G."/>
            <person name="Buck G."/>
            <person name="Choudhury B."/>
            <person name="Clements J."/>
            <person name="Cole J."/>
            <person name="Dicks E."/>
            <person name="Forbes S."/>
            <person name="Gray K."/>
            <person name="Halliday K."/>
            <person name="Harrison R."/>
            <person name="Hills K."/>
            <person name="Hinton J."/>
            <person name="Jenkinson A."/>
            <person name="Jones D."/>
            <person name="Menzies A."/>
            <person name="Mironenko T."/>
            <person name="Perry J."/>
            <person name="Raine K."/>
            <person name="Richardson D."/>
            <person name="Shepherd R."/>
            <person name="Small A."/>
            <person name="Tofts C."/>
            <person name="Varian J."/>
            <person name="Webb T."/>
            <person name="West S."/>
            <person name="Widaa S."/>
            <person name="Yates A."/>
            <person name="Cahill D.P."/>
            <person name="Louis D.N."/>
            <person name="Goldstraw P."/>
            <person name="Nicholson A.G."/>
            <person name="Brasseur F."/>
            <person name="Looijenga L."/>
            <person name="Weber B.L."/>
            <person name="Chiew Y.-E."/>
            <person name="DeFazio A."/>
            <person name="Greaves M.F."/>
            <person name="Green A.R."/>
            <person name="Campbell P."/>
            <person name="Birney E."/>
            <person name="Easton D.F."/>
            <person name="Chenevix-Trench G."/>
            <person name="Tan M.-H."/>
            <person name="Khoo S.K."/>
            <person name="Teh B.T."/>
            <person name="Yuen S.T."/>
            <person name="Leung S.Y."/>
            <person name="Wooster R."/>
            <person name="Futreal P.A."/>
            <person name="Stratton M.R."/>
        </authorList>
    </citation>
    <scope>VARIANTS [LARGE SCALE ANALYSIS] GLU-7; GLN-9 AND PHE-183</scope>
</reference>
<evidence type="ECO:0000250" key="1"/>
<evidence type="ECO:0000250" key="2">
    <source>
        <dbReference type="UniProtKB" id="P49025"/>
    </source>
</evidence>
<evidence type="ECO:0000255" key="3"/>
<evidence type="ECO:0000255" key="4">
    <source>
        <dbReference type="PROSITE-ProRule" id="PRU00145"/>
    </source>
</evidence>
<evidence type="ECO:0000255" key="5">
    <source>
        <dbReference type="PROSITE-ProRule" id="PRU00159"/>
    </source>
</evidence>
<evidence type="ECO:0000255" key="6">
    <source>
        <dbReference type="PROSITE-ProRule" id="PRU00226"/>
    </source>
</evidence>
<evidence type="ECO:0000255" key="7">
    <source>
        <dbReference type="PROSITE-ProRule" id="PRU00618"/>
    </source>
</evidence>
<evidence type="ECO:0000255" key="8">
    <source>
        <dbReference type="PROSITE-ProRule" id="PRU00795"/>
    </source>
</evidence>
<evidence type="ECO:0000255" key="9">
    <source>
        <dbReference type="PROSITE-ProRule" id="PRU10027"/>
    </source>
</evidence>
<evidence type="ECO:0000256" key="10">
    <source>
        <dbReference type="SAM" id="MobiDB-lite"/>
    </source>
</evidence>
<evidence type="ECO:0000269" key="11">
    <source>
    </source>
</evidence>
<evidence type="ECO:0000269" key="12">
    <source>
    </source>
</evidence>
<evidence type="ECO:0000269" key="13">
    <source>
    </source>
</evidence>
<evidence type="ECO:0000269" key="14">
    <source>
    </source>
</evidence>
<evidence type="ECO:0000269" key="15">
    <source>
    </source>
</evidence>
<evidence type="ECO:0000269" key="16">
    <source>
    </source>
</evidence>
<evidence type="ECO:0000269" key="17">
    <source>
    </source>
</evidence>
<evidence type="ECO:0000269" key="18">
    <source>
    </source>
</evidence>
<evidence type="ECO:0000269" key="19">
    <source>
    </source>
</evidence>
<evidence type="ECO:0000303" key="20">
    <source>
    </source>
</evidence>
<evidence type="ECO:0000303" key="21">
    <source>
    </source>
</evidence>
<evidence type="ECO:0000303" key="22">
    <source ref="2"/>
</evidence>
<evidence type="ECO:0000305" key="23"/>
<evidence type="ECO:0007744" key="24">
    <source>
    </source>
</evidence>
<evidence type="ECO:0007744" key="25">
    <source>
    </source>
</evidence>
<evidence type="ECO:0007744" key="26">
    <source>
    </source>
</evidence>
<evidence type="ECO:0007744" key="27">
    <source>
    </source>
</evidence>
<evidence type="ECO:0007744" key="28">
    <source>
    </source>
</evidence>
<evidence type="ECO:0007744" key="29">
    <source>
    </source>
</evidence>
<evidence type="ECO:0007744" key="30">
    <source>
    </source>
</evidence>
<feature type="chain" id="PRO_0000085908" description="Citron Rho-interacting kinase">
    <location>
        <begin position="1"/>
        <end position="2027"/>
    </location>
</feature>
<feature type="domain" description="Protein kinase" evidence="5">
    <location>
        <begin position="97"/>
        <end position="360"/>
    </location>
</feature>
<feature type="domain" description="AGC-kinase C-terminal" evidence="7">
    <location>
        <begin position="361"/>
        <end position="431"/>
    </location>
</feature>
<feature type="domain" description="PH" evidence="4">
    <location>
        <begin position="1443"/>
        <end position="1563"/>
    </location>
</feature>
<feature type="domain" description="CNH" evidence="8">
    <location>
        <begin position="1591"/>
        <end position="1881"/>
    </location>
</feature>
<feature type="zinc finger region" description="Phorbol-ester/DAG-type" evidence="6">
    <location>
        <begin position="1362"/>
        <end position="1411"/>
    </location>
</feature>
<feature type="region of interest" description="Interaction with Rho/Rac">
    <location>
        <begin position="1091"/>
        <end position="1302"/>
    </location>
</feature>
<feature type="region of interest" description="Disordered" evidence="10">
    <location>
        <begin position="1290"/>
        <end position="1310"/>
    </location>
</feature>
<feature type="region of interest" description="Disordered" evidence="10">
    <location>
        <begin position="1322"/>
        <end position="1351"/>
    </location>
</feature>
<feature type="region of interest" description="Disordered" evidence="10">
    <location>
        <begin position="1905"/>
        <end position="2012"/>
    </location>
</feature>
<feature type="coiled-coil region" evidence="3">
    <location>
        <begin position="453"/>
        <end position="1297"/>
    </location>
</feature>
<feature type="short sequence motif" description="SH3-binding" evidence="3">
    <location>
        <begin position="1953"/>
        <end position="1958"/>
    </location>
</feature>
<feature type="compositionally biased region" description="Basic and acidic residues" evidence="10">
    <location>
        <begin position="1290"/>
        <end position="1303"/>
    </location>
</feature>
<feature type="compositionally biased region" description="Low complexity" evidence="10">
    <location>
        <begin position="1327"/>
        <end position="1337"/>
    </location>
</feature>
<feature type="compositionally biased region" description="Basic and acidic residues" evidence="10">
    <location>
        <begin position="1339"/>
        <end position="1351"/>
    </location>
</feature>
<feature type="compositionally biased region" description="Basic and acidic residues" evidence="10">
    <location>
        <begin position="1948"/>
        <end position="2003"/>
    </location>
</feature>
<feature type="active site" description="Proton acceptor" evidence="5 9">
    <location>
        <position position="221"/>
    </location>
</feature>
<feature type="binding site" evidence="5">
    <location>
        <begin position="103"/>
        <end position="111"/>
    </location>
    <ligand>
        <name>ATP</name>
        <dbReference type="ChEBI" id="CHEBI:30616"/>
    </ligand>
</feature>
<feature type="binding site" evidence="5">
    <location>
        <position position="126"/>
    </location>
    <ligand>
        <name>ATP</name>
        <dbReference type="ChEBI" id="CHEBI:30616"/>
    </ligand>
</feature>
<feature type="modified residue" description="N-acetylmethionine" evidence="29">
    <location>
        <position position="1"/>
    </location>
</feature>
<feature type="modified residue" description="Phosphoserine" evidence="26 30">
    <location>
        <position position="433"/>
    </location>
</feature>
<feature type="modified residue" description="Phosphoserine" evidence="24 26 27 28 30">
    <location>
        <position position="440"/>
    </location>
</feature>
<feature type="modified residue" description="Phosphoserine" evidence="30">
    <location>
        <position position="480"/>
    </location>
</feature>
<feature type="modified residue" description="Phosphoserine" evidence="30">
    <location>
        <position position="582"/>
    </location>
</feature>
<feature type="modified residue" description="Phosphotyrosine" evidence="2">
    <location>
        <position position="1196"/>
    </location>
</feature>
<feature type="modified residue" description="N6-acetyllysine" evidence="25">
    <location>
        <position position="1721"/>
    </location>
</feature>
<feature type="modified residue" description="Phosphoserine" evidence="30">
    <location>
        <position position="1940"/>
    </location>
</feature>
<feature type="modified residue" description="Phosphoserine" evidence="30">
    <location>
        <position position="1993"/>
    </location>
</feature>
<feature type="modified residue" description="Phosphothreonine" evidence="30">
    <location>
        <position position="2013"/>
    </location>
</feature>
<feature type="splice variant" id="VSP_014507" description="In isoform 3." evidence="20">
    <location>
        <begin position="1"/>
        <end position="467"/>
    </location>
</feature>
<feature type="splice variant" id="VSP_012434" description="In isoform 2." evidence="22">
    <original>EV</original>
    <variation>GG</variation>
    <location>
        <begin position="481"/>
        <end position="482"/>
    </location>
</feature>
<feature type="splice variant" id="VSP_012435" description="In isoform 2." evidence="22">
    <location>
        <begin position="483"/>
        <end position="2027"/>
    </location>
</feature>
<feature type="splice variant" id="VSP_043301" description="In isoform 4." evidence="21">
    <original>E</original>
    <variation>EERRHSLENKVKRLETMERRENRLKDDIQTKSQQIQQMADKIL</variation>
    <location>
        <position position="694"/>
    </location>
</feature>
<feature type="splice variant" id="VSP_014508" description="In isoform 3." evidence="20">
    <location>
        <begin position="1239"/>
        <end position="1253"/>
    </location>
</feature>
<feature type="splice variant" id="VSP_014509" description="In isoform 3." evidence="20">
    <location>
        <position position="1919"/>
    </location>
</feature>
<feature type="sequence variant" id="VAR_040417" description="In dbSNP:rs36054900." evidence="13">
    <original>G</original>
    <variation>E</variation>
    <location>
        <position position="7"/>
    </location>
</feature>
<feature type="sequence variant" id="VAR_040418" description="In dbSNP:rs56193743." evidence="13">
    <original>R</original>
    <variation>Q</variation>
    <location>
        <position position="9"/>
    </location>
</feature>
<feature type="sequence variant" id="VAR_077442" description="In MCPH17; impairs kinase activity; exhibits abnormal mitotic cytokinesis; exhibits multipolar spindles; increases the neurons apoptotic process; dbSNP:rs886037892." evidence="16">
    <original>G</original>
    <variation>V</variation>
    <location>
        <position position="106"/>
    </location>
</feature>
<feature type="sequence variant" id="VAR_077443" description="In MCPH17; impairs kinase activity; exhibits abnormal mitotic cytokinesis; exhibits multipolar spindles; increases the neurons apoptotic process; dbSNP:rs886037893." evidence="16">
    <original>K</original>
    <variation>Q</variation>
    <location>
        <position position="126"/>
    </location>
</feature>
<feature type="sequence variant" id="VAR_040419" evidence="13">
    <original>L</original>
    <variation>F</variation>
    <location>
        <position position="183"/>
    </location>
</feature>
<feature type="sequence variant" id="VAR_077444" description="In MCPH17; impairs kinase activity; exhibits abnormal mitotic cytokinesis; exhibits multipolar spindles; increases the neurons apoptotic process; dbSNP:rs886037894." evidence="16">
    <original>D</original>
    <variation>V</variation>
    <location>
        <position position="230"/>
    </location>
</feature>
<feature type="sequence conflict" description="In Ref. 2; AAP43922." evidence="23" ref="2">
    <original>L</original>
    <variation>S</variation>
    <location>
        <position position="12"/>
    </location>
</feature>
<feature type="sequence conflict" description="In Ref. 2; AAP43922." evidence="23" ref="2">
    <original>F</original>
    <variation>L</variation>
    <location>
        <position position="56"/>
    </location>
</feature>
<feature type="sequence conflict" description="In Ref. 2; AAP43922." evidence="23" ref="2">
    <original>V</original>
    <variation>L</variation>
    <location>
        <position position="218"/>
    </location>
</feature>